<organism>
    <name type="scientific">Nostoc sp. (strain PCC 7120 / SAG 25.82 / UTEX 2576)</name>
    <dbReference type="NCBI Taxonomy" id="103690"/>
    <lineage>
        <taxon>Bacteria</taxon>
        <taxon>Bacillati</taxon>
        <taxon>Cyanobacteriota</taxon>
        <taxon>Cyanophyceae</taxon>
        <taxon>Nostocales</taxon>
        <taxon>Nostocaceae</taxon>
        <taxon>Nostoc</taxon>
    </lineage>
</organism>
<sequence length="298" mass="31045">MSVVSSVTVKVPGTTANLGPGFDCIGAALTIYNQFQFTRLEESGLIIQATGAEAERVPTDESNLIYQAFAKLYQYIDQPAPGVKIEIELGVPLARGLGSSATAIVAANRLAGEPLSQAQVMALAIAIEGHPDNVVPALLGGCRLAATGASGWEICDVPWHSHIVPVLAIPDFELSTSEARRVLPTEYSRADAIFNTAHLGLLLRGLETGKGEWLRAALQDKLHQPYRQALIPGYDAVNTAAVAAGAYGMVISGAGPTLLALADVSHAAAVEAAMSTAWQEAGITAVVRSLALDTHGAT</sequence>
<name>KHSE_NOSS1</name>
<reference key="1">
    <citation type="journal article" date="2001" name="DNA Res.">
        <title>Complete genomic sequence of the filamentous nitrogen-fixing cyanobacterium Anabaena sp. strain PCC 7120.</title>
        <authorList>
            <person name="Kaneko T."/>
            <person name="Nakamura Y."/>
            <person name="Wolk C.P."/>
            <person name="Kuritz T."/>
            <person name="Sasamoto S."/>
            <person name="Watanabe A."/>
            <person name="Iriguchi M."/>
            <person name="Ishikawa A."/>
            <person name="Kawashima K."/>
            <person name="Kimura T."/>
            <person name="Kishida Y."/>
            <person name="Kohara M."/>
            <person name="Matsumoto M."/>
            <person name="Matsuno A."/>
            <person name="Muraki A."/>
            <person name="Nakazaki N."/>
            <person name="Shimpo S."/>
            <person name="Sugimoto M."/>
            <person name="Takazawa M."/>
            <person name="Yamada M."/>
            <person name="Yasuda M."/>
            <person name="Tabata S."/>
        </authorList>
    </citation>
    <scope>NUCLEOTIDE SEQUENCE [LARGE SCALE GENOMIC DNA]</scope>
    <source>
        <strain>PCC 7120 / SAG 25.82 / UTEX 2576</strain>
    </source>
</reference>
<protein>
    <recommendedName>
        <fullName>Homoserine kinase</fullName>
        <shortName>HK</shortName>
        <shortName>HSK</shortName>
        <ecNumber>2.7.1.39</ecNumber>
    </recommendedName>
</protein>
<dbReference type="EC" id="2.7.1.39"/>
<dbReference type="EMBL" id="BA000019">
    <property type="protein sequence ID" value="BAB72304.1"/>
    <property type="status" value="ALT_INIT"/>
    <property type="molecule type" value="Genomic_DNA"/>
</dbReference>
<dbReference type="PIR" id="AI1849">
    <property type="entry name" value="AI1849"/>
</dbReference>
<dbReference type="SMR" id="Q8YZV9"/>
<dbReference type="STRING" id="103690.gene:10492354"/>
<dbReference type="KEGG" id="ana:alr0346"/>
<dbReference type="eggNOG" id="COG0083">
    <property type="taxonomic scope" value="Bacteria"/>
</dbReference>
<dbReference type="UniPathway" id="UPA00050">
    <property type="reaction ID" value="UER00064"/>
</dbReference>
<dbReference type="Proteomes" id="UP000002483">
    <property type="component" value="Chromosome"/>
</dbReference>
<dbReference type="GO" id="GO:0005737">
    <property type="term" value="C:cytoplasm"/>
    <property type="evidence" value="ECO:0007669"/>
    <property type="project" value="UniProtKB-SubCell"/>
</dbReference>
<dbReference type="GO" id="GO:0005524">
    <property type="term" value="F:ATP binding"/>
    <property type="evidence" value="ECO:0007669"/>
    <property type="project" value="UniProtKB-UniRule"/>
</dbReference>
<dbReference type="GO" id="GO:0004413">
    <property type="term" value="F:homoserine kinase activity"/>
    <property type="evidence" value="ECO:0007669"/>
    <property type="project" value="UniProtKB-UniRule"/>
</dbReference>
<dbReference type="GO" id="GO:0009088">
    <property type="term" value="P:threonine biosynthetic process"/>
    <property type="evidence" value="ECO:0007669"/>
    <property type="project" value="UniProtKB-UniRule"/>
</dbReference>
<dbReference type="Gene3D" id="3.30.230.10">
    <property type="match status" value="1"/>
</dbReference>
<dbReference type="Gene3D" id="3.30.70.890">
    <property type="entry name" value="GHMP kinase, C-terminal domain"/>
    <property type="match status" value="1"/>
</dbReference>
<dbReference type="HAMAP" id="MF_00384">
    <property type="entry name" value="Homoser_kinase"/>
    <property type="match status" value="1"/>
</dbReference>
<dbReference type="InterPro" id="IPR013750">
    <property type="entry name" value="GHMP_kinase_C_dom"/>
</dbReference>
<dbReference type="InterPro" id="IPR036554">
    <property type="entry name" value="GHMP_kinase_C_sf"/>
</dbReference>
<dbReference type="InterPro" id="IPR006204">
    <property type="entry name" value="GHMP_kinase_N_dom"/>
</dbReference>
<dbReference type="InterPro" id="IPR006203">
    <property type="entry name" value="GHMP_knse_ATP-bd_CS"/>
</dbReference>
<dbReference type="InterPro" id="IPR000870">
    <property type="entry name" value="Homoserine_kinase"/>
</dbReference>
<dbReference type="InterPro" id="IPR020568">
    <property type="entry name" value="Ribosomal_Su5_D2-typ_SF"/>
</dbReference>
<dbReference type="InterPro" id="IPR014721">
    <property type="entry name" value="Ribsml_uS5_D2-typ_fold_subgr"/>
</dbReference>
<dbReference type="NCBIfam" id="NF002288">
    <property type="entry name" value="PRK01212.1-4"/>
    <property type="match status" value="1"/>
</dbReference>
<dbReference type="NCBIfam" id="TIGR00191">
    <property type="entry name" value="thrB"/>
    <property type="match status" value="1"/>
</dbReference>
<dbReference type="PANTHER" id="PTHR20861:SF1">
    <property type="entry name" value="HOMOSERINE KINASE"/>
    <property type="match status" value="1"/>
</dbReference>
<dbReference type="PANTHER" id="PTHR20861">
    <property type="entry name" value="HOMOSERINE/4-DIPHOSPHOCYTIDYL-2-C-METHYL-D-ERYTHRITOL KINASE"/>
    <property type="match status" value="1"/>
</dbReference>
<dbReference type="Pfam" id="PF08544">
    <property type="entry name" value="GHMP_kinases_C"/>
    <property type="match status" value="1"/>
</dbReference>
<dbReference type="Pfam" id="PF00288">
    <property type="entry name" value="GHMP_kinases_N"/>
    <property type="match status" value="1"/>
</dbReference>
<dbReference type="PIRSF" id="PIRSF000676">
    <property type="entry name" value="Homoser_kin"/>
    <property type="match status" value="1"/>
</dbReference>
<dbReference type="PRINTS" id="PR00958">
    <property type="entry name" value="HOMSERKINASE"/>
</dbReference>
<dbReference type="SUPFAM" id="SSF55060">
    <property type="entry name" value="GHMP Kinase, C-terminal domain"/>
    <property type="match status" value="1"/>
</dbReference>
<dbReference type="SUPFAM" id="SSF54211">
    <property type="entry name" value="Ribosomal protein S5 domain 2-like"/>
    <property type="match status" value="1"/>
</dbReference>
<dbReference type="PROSITE" id="PS00627">
    <property type="entry name" value="GHMP_KINASES_ATP"/>
    <property type="match status" value="1"/>
</dbReference>
<evidence type="ECO:0000250" key="1"/>
<evidence type="ECO:0000255" key="2"/>
<evidence type="ECO:0000305" key="3"/>
<accession>Q8YZV9</accession>
<feature type="chain" id="PRO_0000156545" description="Homoserine kinase">
    <location>
        <begin position="1"/>
        <end position="298"/>
    </location>
</feature>
<feature type="binding site" evidence="2">
    <location>
        <begin position="92"/>
        <end position="102"/>
    </location>
    <ligand>
        <name>ATP</name>
        <dbReference type="ChEBI" id="CHEBI:30616"/>
    </ligand>
</feature>
<proteinExistence type="inferred from homology"/>
<comment type="function">
    <text evidence="1">Catalyzes the ATP-dependent phosphorylation of L-homoserine to L-homoserine phosphate.</text>
</comment>
<comment type="catalytic activity">
    <reaction>
        <text>L-homoserine + ATP = O-phospho-L-homoserine + ADP + H(+)</text>
        <dbReference type="Rhea" id="RHEA:13985"/>
        <dbReference type="ChEBI" id="CHEBI:15378"/>
        <dbReference type="ChEBI" id="CHEBI:30616"/>
        <dbReference type="ChEBI" id="CHEBI:57476"/>
        <dbReference type="ChEBI" id="CHEBI:57590"/>
        <dbReference type="ChEBI" id="CHEBI:456216"/>
        <dbReference type="EC" id="2.7.1.39"/>
    </reaction>
</comment>
<comment type="pathway">
    <text>Amino-acid biosynthesis; L-threonine biosynthesis; L-threonine from L-aspartate: step 4/5.</text>
</comment>
<comment type="subcellular location">
    <subcellularLocation>
        <location evidence="3">Cytoplasm</location>
    </subcellularLocation>
</comment>
<comment type="similarity">
    <text evidence="3">Belongs to the GHMP kinase family. Homoserine kinase subfamily.</text>
</comment>
<comment type="sequence caution" evidence="3">
    <conflict type="erroneous initiation">
        <sequence resource="EMBL-CDS" id="BAB72304"/>
    </conflict>
</comment>
<gene>
    <name type="primary">thrB</name>
    <name type="ordered locus">alr0346</name>
</gene>
<keyword id="KW-0028">Amino-acid biosynthesis</keyword>
<keyword id="KW-0067">ATP-binding</keyword>
<keyword id="KW-0963">Cytoplasm</keyword>
<keyword id="KW-0418">Kinase</keyword>
<keyword id="KW-0547">Nucleotide-binding</keyword>
<keyword id="KW-1185">Reference proteome</keyword>
<keyword id="KW-0791">Threonine biosynthesis</keyword>
<keyword id="KW-0808">Transferase</keyword>